<sequence>MAKLIAFNQEAREGILKGVDALANAVKVTLGPRGRNVVLQKAFGSPTVTNDGVTIAREIDLSDPFENLGAQLVKSVAVKTNDIAGDGTTTATLLAQAVVTEGLRNVAAGANPIELNRGIAAGSEFVVGKLRERATDVSSAADIANVATVSSRDPEVGDMVAAAMEKVGKDGVVTVEESQSIESYLDVTEGVSFDKGFLSPYFITDTDTQHAVLEQPAILLVRNKISSLPDFLPVLEKALEASKPILIIAEDVEGEPLQTLVVNSIRKTLRAVAVKAPYFGERRKAFMDDLAVVTGATVIDPEVGVNLNEAGAEVFGTARRVTVTKDETIIVDGAGTAEAVENRRAQIRREIENTDSAWDREKAEERLAKLSGGVAVIKVGAATETEVSERKLRVEDAINAARAAAQEGVIAGGGSALVQISKELREFAQEFEGDAKIGVIALANALAKPTYWIADNAGLDGAVVVSKVSELPNGEGFNAATLEYGNLIEQGIIDPVKVTHSAVVNATSVARMVLTTEASVVEKPAAPAPEAGHHHHHHH</sequence>
<proteinExistence type="inferred from homology"/>
<dbReference type="EC" id="5.6.1.7" evidence="1"/>
<dbReference type="EMBL" id="BX248355">
    <property type="protein sequence ID" value="CAE49090.1"/>
    <property type="molecule type" value="Genomic_DNA"/>
</dbReference>
<dbReference type="SMR" id="Q6NJ37"/>
<dbReference type="STRING" id="257309.DIP0576"/>
<dbReference type="KEGG" id="cdi:DIP0576"/>
<dbReference type="HOGENOM" id="CLU_016503_6_1_11"/>
<dbReference type="Proteomes" id="UP000002198">
    <property type="component" value="Chromosome"/>
</dbReference>
<dbReference type="GO" id="GO:0005737">
    <property type="term" value="C:cytoplasm"/>
    <property type="evidence" value="ECO:0007669"/>
    <property type="project" value="UniProtKB-SubCell"/>
</dbReference>
<dbReference type="GO" id="GO:0005524">
    <property type="term" value="F:ATP binding"/>
    <property type="evidence" value="ECO:0007669"/>
    <property type="project" value="UniProtKB-UniRule"/>
</dbReference>
<dbReference type="GO" id="GO:0140662">
    <property type="term" value="F:ATP-dependent protein folding chaperone"/>
    <property type="evidence" value="ECO:0007669"/>
    <property type="project" value="InterPro"/>
</dbReference>
<dbReference type="GO" id="GO:0016853">
    <property type="term" value="F:isomerase activity"/>
    <property type="evidence" value="ECO:0007669"/>
    <property type="project" value="UniProtKB-KW"/>
</dbReference>
<dbReference type="GO" id="GO:0051082">
    <property type="term" value="F:unfolded protein binding"/>
    <property type="evidence" value="ECO:0007669"/>
    <property type="project" value="UniProtKB-UniRule"/>
</dbReference>
<dbReference type="GO" id="GO:0042026">
    <property type="term" value="P:protein refolding"/>
    <property type="evidence" value="ECO:0007669"/>
    <property type="project" value="UniProtKB-UniRule"/>
</dbReference>
<dbReference type="CDD" id="cd03344">
    <property type="entry name" value="GroEL"/>
    <property type="match status" value="1"/>
</dbReference>
<dbReference type="FunFam" id="3.50.7.10:FF:000001">
    <property type="entry name" value="60 kDa chaperonin"/>
    <property type="match status" value="1"/>
</dbReference>
<dbReference type="Gene3D" id="3.50.7.10">
    <property type="entry name" value="GroEL"/>
    <property type="match status" value="1"/>
</dbReference>
<dbReference type="Gene3D" id="1.10.560.10">
    <property type="entry name" value="GroEL-like equatorial domain"/>
    <property type="match status" value="1"/>
</dbReference>
<dbReference type="Gene3D" id="3.30.260.10">
    <property type="entry name" value="TCP-1-like chaperonin intermediate domain"/>
    <property type="match status" value="1"/>
</dbReference>
<dbReference type="HAMAP" id="MF_00600">
    <property type="entry name" value="CH60"/>
    <property type="match status" value="1"/>
</dbReference>
<dbReference type="InterPro" id="IPR018370">
    <property type="entry name" value="Chaperonin_Cpn60_CS"/>
</dbReference>
<dbReference type="InterPro" id="IPR001844">
    <property type="entry name" value="Cpn60/GroEL"/>
</dbReference>
<dbReference type="InterPro" id="IPR002423">
    <property type="entry name" value="Cpn60/GroEL/TCP-1"/>
</dbReference>
<dbReference type="InterPro" id="IPR027409">
    <property type="entry name" value="GroEL-like_apical_dom_sf"/>
</dbReference>
<dbReference type="InterPro" id="IPR027413">
    <property type="entry name" value="GROEL-like_equatorial_sf"/>
</dbReference>
<dbReference type="InterPro" id="IPR027410">
    <property type="entry name" value="TCP-1-like_intermed_sf"/>
</dbReference>
<dbReference type="NCBIfam" id="TIGR02348">
    <property type="entry name" value="GroEL"/>
    <property type="match status" value="1"/>
</dbReference>
<dbReference type="NCBIfam" id="NF000592">
    <property type="entry name" value="PRK00013.1"/>
    <property type="match status" value="1"/>
</dbReference>
<dbReference type="NCBIfam" id="NF009487">
    <property type="entry name" value="PRK12849.1"/>
    <property type="match status" value="1"/>
</dbReference>
<dbReference type="NCBIfam" id="NF009488">
    <property type="entry name" value="PRK12850.1"/>
    <property type="match status" value="1"/>
</dbReference>
<dbReference type="NCBIfam" id="NF009489">
    <property type="entry name" value="PRK12851.1"/>
    <property type="match status" value="1"/>
</dbReference>
<dbReference type="PANTHER" id="PTHR45633">
    <property type="entry name" value="60 KDA HEAT SHOCK PROTEIN, MITOCHONDRIAL"/>
    <property type="match status" value="1"/>
</dbReference>
<dbReference type="Pfam" id="PF00118">
    <property type="entry name" value="Cpn60_TCP1"/>
    <property type="match status" value="1"/>
</dbReference>
<dbReference type="PRINTS" id="PR00298">
    <property type="entry name" value="CHAPERONIN60"/>
</dbReference>
<dbReference type="SUPFAM" id="SSF52029">
    <property type="entry name" value="GroEL apical domain-like"/>
    <property type="match status" value="1"/>
</dbReference>
<dbReference type="SUPFAM" id="SSF48592">
    <property type="entry name" value="GroEL equatorial domain-like"/>
    <property type="match status" value="1"/>
</dbReference>
<dbReference type="SUPFAM" id="SSF54849">
    <property type="entry name" value="GroEL-intermediate domain like"/>
    <property type="match status" value="1"/>
</dbReference>
<dbReference type="PROSITE" id="PS00296">
    <property type="entry name" value="CHAPERONINS_CPN60"/>
    <property type="match status" value="1"/>
</dbReference>
<organism>
    <name type="scientific">Corynebacterium diphtheriae (strain ATCC 700971 / NCTC 13129 / Biotype gravis)</name>
    <dbReference type="NCBI Taxonomy" id="257309"/>
    <lineage>
        <taxon>Bacteria</taxon>
        <taxon>Bacillati</taxon>
        <taxon>Actinomycetota</taxon>
        <taxon>Actinomycetes</taxon>
        <taxon>Mycobacteriales</taxon>
        <taxon>Corynebacteriaceae</taxon>
        <taxon>Corynebacterium</taxon>
    </lineage>
</organism>
<reference key="1">
    <citation type="journal article" date="2003" name="Nucleic Acids Res.">
        <title>The complete genome sequence and analysis of Corynebacterium diphtheriae NCTC13129.</title>
        <authorList>
            <person name="Cerdeno-Tarraga A.-M."/>
            <person name="Efstratiou A."/>
            <person name="Dover L.G."/>
            <person name="Holden M.T.G."/>
            <person name="Pallen M.J."/>
            <person name="Bentley S.D."/>
            <person name="Besra G.S."/>
            <person name="Churcher C.M."/>
            <person name="James K.D."/>
            <person name="De Zoysa A."/>
            <person name="Chillingworth T."/>
            <person name="Cronin A."/>
            <person name="Dowd L."/>
            <person name="Feltwell T."/>
            <person name="Hamlin N."/>
            <person name="Holroyd S."/>
            <person name="Jagels K."/>
            <person name="Moule S."/>
            <person name="Quail M.A."/>
            <person name="Rabbinowitsch E."/>
            <person name="Rutherford K.M."/>
            <person name="Thomson N.R."/>
            <person name="Unwin L."/>
            <person name="Whitehead S."/>
            <person name="Barrell B.G."/>
            <person name="Parkhill J."/>
        </authorList>
    </citation>
    <scope>NUCLEOTIDE SEQUENCE [LARGE SCALE GENOMIC DNA]</scope>
    <source>
        <strain>ATCC 700971 / NCTC 13129 / Biotype gravis</strain>
    </source>
</reference>
<gene>
    <name evidence="1" type="primary">groEL1</name>
    <name evidence="1" type="synonym">groL1</name>
    <name type="ordered locus">DIP0576</name>
</gene>
<keyword id="KW-0067">ATP-binding</keyword>
<keyword id="KW-0143">Chaperone</keyword>
<keyword id="KW-0963">Cytoplasm</keyword>
<keyword id="KW-0413">Isomerase</keyword>
<keyword id="KW-0547">Nucleotide-binding</keyword>
<keyword id="KW-1185">Reference proteome</keyword>
<comment type="function">
    <text evidence="1">Together with its co-chaperonin GroES, plays an essential role in assisting protein folding. The GroEL-GroES system forms a nano-cage that allows encapsulation of the non-native substrate proteins and provides a physical environment optimized to promote and accelerate protein folding.</text>
</comment>
<comment type="catalytic activity">
    <reaction evidence="1">
        <text>ATP + H2O + a folded polypeptide = ADP + phosphate + an unfolded polypeptide.</text>
        <dbReference type="EC" id="5.6.1.7"/>
    </reaction>
</comment>
<comment type="subunit">
    <text evidence="1">Forms a cylinder of 14 subunits composed of two heptameric rings stacked back-to-back. Interacts with the co-chaperonin GroES.</text>
</comment>
<comment type="subcellular location">
    <subcellularLocation>
        <location evidence="1">Cytoplasm</location>
    </subcellularLocation>
</comment>
<comment type="similarity">
    <text evidence="1">Belongs to the chaperonin (HSP60) family.</text>
</comment>
<evidence type="ECO:0000255" key="1">
    <source>
        <dbReference type="HAMAP-Rule" id="MF_00600"/>
    </source>
</evidence>
<feature type="chain" id="PRO_0000063347" description="Chaperonin GroEL 1">
    <location>
        <begin position="1"/>
        <end position="539"/>
    </location>
</feature>
<feature type="binding site" evidence="1">
    <location>
        <begin position="29"/>
        <end position="32"/>
    </location>
    <ligand>
        <name>ATP</name>
        <dbReference type="ChEBI" id="CHEBI:30616"/>
    </ligand>
</feature>
<feature type="binding site" evidence="1">
    <location>
        <begin position="86"/>
        <end position="90"/>
    </location>
    <ligand>
        <name>ATP</name>
        <dbReference type="ChEBI" id="CHEBI:30616"/>
    </ligand>
</feature>
<feature type="binding site" evidence="1">
    <location>
        <position position="413"/>
    </location>
    <ligand>
        <name>ATP</name>
        <dbReference type="ChEBI" id="CHEBI:30616"/>
    </ligand>
</feature>
<feature type="binding site" evidence="1">
    <location>
        <begin position="478"/>
        <end position="480"/>
    </location>
    <ligand>
        <name>ATP</name>
        <dbReference type="ChEBI" id="CHEBI:30616"/>
    </ligand>
</feature>
<feature type="binding site" evidence="1">
    <location>
        <position position="494"/>
    </location>
    <ligand>
        <name>ATP</name>
        <dbReference type="ChEBI" id="CHEBI:30616"/>
    </ligand>
</feature>
<protein>
    <recommendedName>
        <fullName evidence="1">Chaperonin GroEL 1</fullName>
        <ecNumber evidence="1">5.6.1.7</ecNumber>
    </recommendedName>
    <alternativeName>
        <fullName evidence="1">60 kDa chaperonin 1</fullName>
    </alternativeName>
    <alternativeName>
        <fullName evidence="1">Chaperonin-60 1</fullName>
        <shortName evidence="1">Cpn60 1</shortName>
    </alternativeName>
</protein>
<accession>Q6NJ37</accession>
<name>CH601_CORDI</name>